<protein>
    <recommendedName>
        <fullName evidence="1">Small ribosomal subunit protein uS8</fullName>
    </recommendedName>
    <alternativeName>
        <fullName evidence="2">30S ribosomal protein S8</fullName>
    </alternativeName>
</protein>
<evidence type="ECO:0000255" key="1">
    <source>
        <dbReference type="HAMAP-Rule" id="MF_01302"/>
    </source>
</evidence>
<evidence type="ECO:0000305" key="2"/>
<proteinExistence type="inferred from homology"/>
<organism>
    <name type="scientific">Streptococcus pneumoniae (strain Taiwan19F-14)</name>
    <dbReference type="NCBI Taxonomy" id="487213"/>
    <lineage>
        <taxon>Bacteria</taxon>
        <taxon>Bacillati</taxon>
        <taxon>Bacillota</taxon>
        <taxon>Bacilli</taxon>
        <taxon>Lactobacillales</taxon>
        <taxon>Streptococcaceae</taxon>
        <taxon>Streptococcus</taxon>
    </lineage>
</organism>
<gene>
    <name evidence="1" type="primary">rpsH</name>
    <name type="ordered locus">SPT_0270</name>
</gene>
<comment type="function">
    <text evidence="1">One of the primary rRNA binding proteins, it binds directly to 16S rRNA central domain where it helps coordinate assembly of the platform of the 30S subunit.</text>
</comment>
<comment type="subunit">
    <text evidence="1">Part of the 30S ribosomal subunit. Contacts proteins S5 and S12.</text>
</comment>
<comment type="similarity">
    <text evidence="1">Belongs to the universal ribosomal protein uS8 family.</text>
</comment>
<reference key="1">
    <citation type="journal article" date="2010" name="Genome Biol.">
        <title>Structure and dynamics of the pan-genome of Streptococcus pneumoniae and closely related species.</title>
        <authorList>
            <person name="Donati C."/>
            <person name="Hiller N.L."/>
            <person name="Tettelin H."/>
            <person name="Muzzi A."/>
            <person name="Croucher N.J."/>
            <person name="Angiuoli S.V."/>
            <person name="Oggioni M."/>
            <person name="Dunning Hotopp J.C."/>
            <person name="Hu F.Z."/>
            <person name="Riley D.R."/>
            <person name="Covacci A."/>
            <person name="Mitchell T.J."/>
            <person name="Bentley S.D."/>
            <person name="Kilian M."/>
            <person name="Ehrlich G.D."/>
            <person name="Rappuoli R."/>
            <person name="Moxon E.R."/>
            <person name="Masignani V."/>
        </authorList>
    </citation>
    <scope>NUCLEOTIDE SEQUENCE [LARGE SCALE GENOMIC DNA]</scope>
    <source>
        <strain>Taiwan19F-14</strain>
    </source>
</reference>
<name>RS8_STRZT</name>
<dbReference type="EMBL" id="CP000921">
    <property type="protein sequence ID" value="ACO23658.1"/>
    <property type="molecule type" value="Genomic_DNA"/>
</dbReference>
<dbReference type="RefSeq" id="WP_000245505.1">
    <property type="nucleotide sequence ID" value="NC_012469.1"/>
</dbReference>
<dbReference type="SMR" id="C1CPA2"/>
<dbReference type="GeneID" id="45652295"/>
<dbReference type="KEGG" id="snt:SPT_0270"/>
<dbReference type="HOGENOM" id="CLU_098428_0_2_9"/>
<dbReference type="GO" id="GO:1990904">
    <property type="term" value="C:ribonucleoprotein complex"/>
    <property type="evidence" value="ECO:0007669"/>
    <property type="project" value="UniProtKB-KW"/>
</dbReference>
<dbReference type="GO" id="GO:0005840">
    <property type="term" value="C:ribosome"/>
    <property type="evidence" value="ECO:0007669"/>
    <property type="project" value="UniProtKB-KW"/>
</dbReference>
<dbReference type="GO" id="GO:0019843">
    <property type="term" value="F:rRNA binding"/>
    <property type="evidence" value="ECO:0007669"/>
    <property type="project" value="UniProtKB-UniRule"/>
</dbReference>
<dbReference type="GO" id="GO:0003735">
    <property type="term" value="F:structural constituent of ribosome"/>
    <property type="evidence" value="ECO:0007669"/>
    <property type="project" value="InterPro"/>
</dbReference>
<dbReference type="GO" id="GO:0006412">
    <property type="term" value="P:translation"/>
    <property type="evidence" value="ECO:0007669"/>
    <property type="project" value="UniProtKB-UniRule"/>
</dbReference>
<dbReference type="FunFam" id="3.30.1370.30:FF:000002">
    <property type="entry name" value="30S ribosomal protein S8"/>
    <property type="match status" value="1"/>
</dbReference>
<dbReference type="FunFam" id="3.30.1490.10:FF:000001">
    <property type="entry name" value="30S ribosomal protein S8"/>
    <property type="match status" value="1"/>
</dbReference>
<dbReference type="Gene3D" id="3.30.1370.30">
    <property type="match status" value="1"/>
</dbReference>
<dbReference type="Gene3D" id="3.30.1490.10">
    <property type="match status" value="1"/>
</dbReference>
<dbReference type="HAMAP" id="MF_01302_B">
    <property type="entry name" value="Ribosomal_uS8_B"/>
    <property type="match status" value="1"/>
</dbReference>
<dbReference type="InterPro" id="IPR000630">
    <property type="entry name" value="Ribosomal_uS8"/>
</dbReference>
<dbReference type="InterPro" id="IPR047863">
    <property type="entry name" value="Ribosomal_uS8_CS"/>
</dbReference>
<dbReference type="InterPro" id="IPR035987">
    <property type="entry name" value="Ribosomal_uS8_sf"/>
</dbReference>
<dbReference type="NCBIfam" id="NF001109">
    <property type="entry name" value="PRK00136.1"/>
    <property type="match status" value="1"/>
</dbReference>
<dbReference type="PANTHER" id="PTHR11758">
    <property type="entry name" value="40S RIBOSOMAL PROTEIN S15A"/>
    <property type="match status" value="1"/>
</dbReference>
<dbReference type="Pfam" id="PF00410">
    <property type="entry name" value="Ribosomal_S8"/>
    <property type="match status" value="1"/>
</dbReference>
<dbReference type="SUPFAM" id="SSF56047">
    <property type="entry name" value="Ribosomal protein S8"/>
    <property type="match status" value="1"/>
</dbReference>
<dbReference type="PROSITE" id="PS00053">
    <property type="entry name" value="RIBOSOMAL_S8"/>
    <property type="match status" value="1"/>
</dbReference>
<accession>C1CPA2</accession>
<sequence>MVMTDPIADFLTRIRNANQAKHEVLEVPASNIKKGIAEILKREGFVKNVEIIEDDKQGVIRVFLKYGPNGEKVITNLKRVSKPGLRVYKKREDLPKVLNGLGIAILSTSEGLLTDKEARQKNVGGEVIAYVW</sequence>
<keyword id="KW-0687">Ribonucleoprotein</keyword>
<keyword id="KW-0689">Ribosomal protein</keyword>
<keyword id="KW-0694">RNA-binding</keyword>
<keyword id="KW-0699">rRNA-binding</keyword>
<feature type="chain" id="PRO_1000165357" description="Small ribosomal subunit protein uS8">
    <location>
        <begin position="1"/>
        <end position="132"/>
    </location>
</feature>